<keyword id="KW-0113">Calvin cycle</keyword>
<keyword id="KW-0120">Carbon dioxide fixation</keyword>
<keyword id="KW-0150">Chloroplast</keyword>
<keyword id="KW-0456">Lyase</keyword>
<keyword id="KW-0460">Magnesium</keyword>
<keyword id="KW-0479">Metal-binding</keyword>
<keyword id="KW-0503">Monooxygenase</keyword>
<keyword id="KW-0560">Oxidoreductase</keyword>
<keyword id="KW-0601">Photorespiration</keyword>
<keyword id="KW-0602">Photosynthesis</keyword>
<keyword id="KW-0934">Plastid</keyword>
<proteinExistence type="inferred from homology"/>
<organism>
    <name type="scientific">Cylindrotheca sp. (strain N1)</name>
    <name type="common">Marine diatom</name>
    <dbReference type="NCBI Taxonomy" id="2855"/>
    <lineage>
        <taxon>Eukaryota</taxon>
        <taxon>Sar</taxon>
        <taxon>Stramenopiles</taxon>
        <taxon>Ochrophyta</taxon>
        <taxon>Bacillariophyta</taxon>
        <taxon>Bacillariophyceae</taxon>
        <taxon>Bacillariophycidae</taxon>
        <taxon>Bacillariales</taxon>
        <taxon>Bacillariaceae</taxon>
        <taxon>Cylindrotheca</taxon>
    </lineage>
</organism>
<gene>
    <name evidence="1" type="primary">rbcL</name>
</gene>
<feature type="chain" id="PRO_0000062434" description="Ribulose bisphosphate carboxylase large chain">
    <location>
        <begin position="1"/>
        <end position="490"/>
    </location>
</feature>
<feature type="active site" description="Proton acceptor" evidence="1">
    <location>
        <position position="179"/>
    </location>
</feature>
<feature type="active site" description="Proton acceptor" evidence="1">
    <location>
        <position position="297"/>
    </location>
</feature>
<feature type="binding site" description="in homodimeric partner" evidence="1">
    <location>
        <position position="127"/>
    </location>
    <ligand>
        <name>substrate</name>
    </ligand>
</feature>
<feature type="binding site" evidence="1">
    <location>
        <position position="177"/>
    </location>
    <ligand>
        <name>substrate</name>
    </ligand>
</feature>
<feature type="binding site" evidence="1">
    <location>
        <position position="181"/>
    </location>
    <ligand>
        <name>substrate</name>
    </ligand>
</feature>
<feature type="binding site" description="via carbamate group" evidence="1">
    <location>
        <position position="205"/>
    </location>
    <ligand>
        <name>Mg(2+)</name>
        <dbReference type="ChEBI" id="CHEBI:18420"/>
    </ligand>
</feature>
<feature type="binding site" evidence="1">
    <location>
        <position position="207"/>
    </location>
    <ligand>
        <name>Mg(2+)</name>
        <dbReference type="ChEBI" id="CHEBI:18420"/>
    </ligand>
</feature>
<feature type="binding site" evidence="1">
    <location>
        <position position="208"/>
    </location>
    <ligand>
        <name>Mg(2+)</name>
        <dbReference type="ChEBI" id="CHEBI:18420"/>
    </ligand>
</feature>
<feature type="binding site" evidence="1">
    <location>
        <position position="298"/>
    </location>
    <ligand>
        <name>substrate</name>
    </ligand>
</feature>
<feature type="binding site" evidence="1">
    <location>
        <position position="330"/>
    </location>
    <ligand>
        <name>substrate</name>
    </ligand>
</feature>
<feature type="binding site" evidence="1">
    <location>
        <position position="382"/>
    </location>
    <ligand>
        <name>substrate</name>
    </ligand>
</feature>
<feature type="site" description="Transition state stabilizer" evidence="1">
    <location>
        <position position="337"/>
    </location>
</feature>
<feature type="modified residue" description="N6-carboxylysine" evidence="1">
    <location>
        <position position="205"/>
    </location>
</feature>
<geneLocation type="chloroplast"/>
<name>RBL_CYLSN</name>
<dbReference type="EC" id="4.1.1.39" evidence="1"/>
<dbReference type="EMBL" id="M59080">
    <property type="protein sequence ID" value="AAA84192.1"/>
    <property type="molecule type" value="Genomic_DNA"/>
</dbReference>
<dbReference type="PIR" id="A38728">
    <property type="entry name" value="A38728"/>
</dbReference>
<dbReference type="SMR" id="P24673"/>
<dbReference type="GO" id="GO:0009507">
    <property type="term" value="C:chloroplast"/>
    <property type="evidence" value="ECO:0007669"/>
    <property type="project" value="UniProtKB-SubCell"/>
</dbReference>
<dbReference type="GO" id="GO:0000287">
    <property type="term" value="F:magnesium ion binding"/>
    <property type="evidence" value="ECO:0007669"/>
    <property type="project" value="UniProtKB-UniRule"/>
</dbReference>
<dbReference type="GO" id="GO:0004497">
    <property type="term" value="F:monooxygenase activity"/>
    <property type="evidence" value="ECO:0007669"/>
    <property type="project" value="UniProtKB-KW"/>
</dbReference>
<dbReference type="GO" id="GO:0016984">
    <property type="term" value="F:ribulose-bisphosphate carboxylase activity"/>
    <property type="evidence" value="ECO:0007669"/>
    <property type="project" value="UniProtKB-UniRule"/>
</dbReference>
<dbReference type="GO" id="GO:0019253">
    <property type="term" value="P:reductive pentose-phosphate cycle"/>
    <property type="evidence" value="ECO:0007669"/>
    <property type="project" value="UniProtKB-UniRule"/>
</dbReference>
<dbReference type="CDD" id="cd08212">
    <property type="entry name" value="RuBisCO_large_I"/>
    <property type="match status" value="1"/>
</dbReference>
<dbReference type="Gene3D" id="3.20.20.110">
    <property type="entry name" value="Ribulose bisphosphate carboxylase, large subunit, C-terminal domain"/>
    <property type="match status" value="1"/>
</dbReference>
<dbReference type="Gene3D" id="3.30.70.150">
    <property type="entry name" value="RuBisCO large subunit, N-terminal domain"/>
    <property type="match status" value="1"/>
</dbReference>
<dbReference type="HAMAP" id="MF_01338">
    <property type="entry name" value="RuBisCO_L_type1"/>
    <property type="match status" value="1"/>
</dbReference>
<dbReference type="InterPro" id="IPR033966">
    <property type="entry name" value="RuBisCO"/>
</dbReference>
<dbReference type="InterPro" id="IPR020878">
    <property type="entry name" value="RuBisCo_large_chain_AS"/>
</dbReference>
<dbReference type="InterPro" id="IPR000685">
    <property type="entry name" value="RuBisCO_lsu_C"/>
</dbReference>
<dbReference type="InterPro" id="IPR036376">
    <property type="entry name" value="RuBisCO_lsu_C_sf"/>
</dbReference>
<dbReference type="InterPro" id="IPR017443">
    <property type="entry name" value="RuBisCO_lsu_fd_N"/>
</dbReference>
<dbReference type="InterPro" id="IPR036422">
    <property type="entry name" value="RuBisCO_lsu_N_sf"/>
</dbReference>
<dbReference type="InterPro" id="IPR020888">
    <property type="entry name" value="RuBisCO_lsuI"/>
</dbReference>
<dbReference type="NCBIfam" id="NF003252">
    <property type="entry name" value="PRK04208.1"/>
    <property type="match status" value="1"/>
</dbReference>
<dbReference type="PANTHER" id="PTHR42704">
    <property type="entry name" value="RIBULOSE BISPHOSPHATE CARBOXYLASE"/>
    <property type="match status" value="1"/>
</dbReference>
<dbReference type="PANTHER" id="PTHR42704:SF17">
    <property type="entry name" value="RIBULOSE BISPHOSPHATE CARBOXYLASE LARGE CHAIN"/>
    <property type="match status" value="1"/>
</dbReference>
<dbReference type="Pfam" id="PF00016">
    <property type="entry name" value="RuBisCO_large"/>
    <property type="match status" value="1"/>
</dbReference>
<dbReference type="Pfam" id="PF02788">
    <property type="entry name" value="RuBisCO_large_N"/>
    <property type="match status" value="1"/>
</dbReference>
<dbReference type="SFLD" id="SFLDG01052">
    <property type="entry name" value="RuBisCO"/>
    <property type="match status" value="1"/>
</dbReference>
<dbReference type="SFLD" id="SFLDS00014">
    <property type="entry name" value="RuBisCO"/>
    <property type="match status" value="1"/>
</dbReference>
<dbReference type="SFLD" id="SFLDG00301">
    <property type="entry name" value="RuBisCO-like_proteins"/>
    <property type="match status" value="1"/>
</dbReference>
<dbReference type="SUPFAM" id="SSF51649">
    <property type="entry name" value="RuBisCo, C-terminal domain"/>
    <property type="match status" value="1"/>
</dbReference>
<dbReference type="SUPFAM" id="SSF54966">
    <property type="entry name" value="RuBisCO, large subunit, small (N-terminal) domain"/>
    <property type="match status" value="1"/>
</dbReference>
<dbReference type="PROSITE" id="PS00157">
    <property type="entry name" value="RUBISCO_LARGE"/>
    <property type="match status" value="1"/>
</dbReference>
<comment type="function">
    <text evidence="1">RuBisCO catalyzes two reactions: the carboxylation of D-ribulose 1,5-bisphosphate, the primary event in carbon dioxide fixation, as well as the oxidative fragmentation of the pentose substrate in the photorespiration process. Both reactions occur simultaneously and in competition at the same active site.</text>
</comment>
<comment type="catalytic activity">
    <reaction evidence="1">
        <text>2 (2R)-3-phosphoglycerate + 2 H(+) = D-ribulose 1,5-bisphosphate + CO2 + H2O</text>
        <dbReference type="Rhea" id="RHEA:23124"/>
        <dbReference type="ChEBI" id="CHEBI:15377"/>
        <dbReference type="ChEBI" id="CHEBI:15378"/>
        <dbReference type="ChEBI" id="CHEBI:16526"/>
        <dbReference type="ChEBI" id="CHEBI:57870"/>
        <dbReference type="ChEBI" id="CHEBI:58272"/>
        <dbReference type="EC" id="4.1.1.39"/>
    </reaction>
</comment>
<comment type="catalytic activity">
    <reaction evidence="1">
        <text>D-ribulose 1,5-bisphosphate + O2 = 2-phosphoglycolate + (2R)-3-phosphoglycerate + 2 H(+)</text>
        <dbReference type="Rhea" id="RHEA:36631"/>
        <dbReference type="ChEBI" id="CHEBI:15378"/>
        <dbReference type="ChEBI" id="CHEBI:15379"/>
        <dbReference type="ChEBI" id="CHEBI:57870"/>
        <dbReference type="ChEBI" id="CHEBI:58033"/>
        <dbReference type="ChEBI" id="CHEBI:58272"/>
    </reaction>
</comment>
<comment type="cofactor">
    <cofactor evidence="1">
        <name>Mg(2+)</name>
        <dbReference type="ChEBI" id="CHEBI:18420"/>
    </cofactor>
    <text evidence="1">Binds 1 Mg(2+) ion per subunit.</text>
</comment>
<comment type="subunit">
    <text evidence="1">Heterohexadecamer of 8 large chains and 8 small chains.</text>
</comment>
<comment type="subcellular location">
    <subcellularLocation>
        <location>Plastid</location>
        <location>Chloroplast</location>
    </subcellularLocation>
</comment>
<comment type="miscellaneous">
    <text evidence="1">The basic functional RuBisCO is composed of a large chain homodimer in a 'head-to-tail' conformation. In form I RuBisCO this homodimer is arranged in a barrel-like tetramer with the small subunits forming a tetrameric 'cap' on each end of the 'barrel'.</text>
</comment>
<comment type="similarity">
    <text evidence="1">Belongs to the RuBisCO large chain family. Type I subfamily.</text>
</comment>
<accession>P24673</accession>
<sequence length="490" mass="54036">MSQSVSERTRIKSDRYESGVIPYAKMGYWDASYAVKTTDVLALFRITPQPGVDPVEAAAAVAGESSTATWTVVWTDLLTACDRYRAKAYRVDPVPNAADQYFAFIAYECDLFEEGSLANLTASIIGNVFGFKAVAALRLEDMRIPHSYLKTFQGPATGIVVERERLNKYGTPLLGATVKPKLGLSGKNYGRVVYEGLKGGLDFLKDDENINSQPFMRWRERFLNCMEGINRASAATGEVKGSYLNVTAATMEEVYKRSEYAKEVGSIIIMIDLVMGYTAIQSMALWARENDMLLHLHRAGNSTYARQKNHGINFRVICKWMRMSGVDHIHAGTVVGKLEGDPLMIKGFYHTLRLTTLDVNLPYGLFFEMSWASLRRCMPVASGGIHCGQMHQLIHYLGDDVVLQFGGGTIGHPDGIQAGATANRVALESMVLARNEGADYFNQEVGPQILRNAAKTCGPLQSALDLWKDISFNYTSTDTADFAATSTANV</sequence>
<reference key="1">
    <citation type="journal article" date="1991" name="J. Biol. Chem.">
        <title>Cotranscription, deduced primary structure, and expression of the chloroplast-encoded rbcL and rbcS genes of the marine diatom Cylindrotheca sp. strain N1.</title>
        <authorList>
            <person name="Hwang S.-R."/>
            <person name="Tabita F.R."/>
        </authorList>
    </citation>
    <scope>NUCLEOTIDE SEQUENCE [GENOMIC DNA]</scope>
</reference>
<evidence type="ECO:0000255" key="1">
    <source>
        <dbReference type="HAMAP-Rule" id="MF_01338"/>
    </source>
</evidence>
<protein>
    <recommendedName>
        <fullName evidence="1">Ribulose bisphosphate carboxylase large chain</fullName>
        <shortName evidence="1">RuBisCO large subunit</shortName>
        <ecNumber evidence="1">4.1.1.39</ecNumber>
    </recommendedName>
</protein>